<dbReference type="EC" id="1.3.1.102" evidence="3 4 5"/>
<dbReference type="EMBL" id="AB036735">
    <property type="protein sequence ID" value="BAA89423.1"/>
    <property type="molecule type" value="mRNA"/>
</dbReference>
<dbReference type="RefSeq" id="NP_001313179.1">
    <property type="nucleotide sequence ID" value="NM_001326250.1"/>
</dbReference>
<dbReference type="RefSeq" id="XP_016514079.1">
    <property type="nucleotide sequence ID" value="XM_016658593.1"/>
</dbReference>
<dbReference type="PDB" id="4HFJ">
    <property type="method" value="X-ray"/>
    <property type="resolution" value="2.00 A"/>
    <property type="chains" value="A/B=1-343"/>
</dbReference>
<dbReference type="PDB" id="4HFM">
    <property type="method" value="X-ray"/>
    <property type="resolution" value="1.90 A"/>
    <property type="chains" value="A/B=1-343"/>
</dbReference>
<dbReference type="PDB" id="4HFN">
    <property type="method" value="X-ray"/>
    <property type="resolution" value="2.10 A"/>
    <property type="chains" value="A/B=1-343"/>
</dbReference>
<dbReference type="PDBsum" id="4HFJ"/>
<dbReference type="PDBsum" id="4HFM"/>
<dbReference type="PDBsum" id="4HFN"/>
<dbReference type="SMR" id="Q9SLN8"/>
<dbReference type="STRING" id="4097.Q9SLN8"/>
<dbReference type="iPTMnet" id="Q9SLN8"/>
<dbReference type="PaxDb" id="4097-Q9SLN8"/>
<dbReference type="GeneID" id="107830910"/>
<dbReference type="KEGG" id="ag:BAA89423"/>
<dbReference type="KEGG" id="nta:107830910"/>
<dbReference type="OMA" id="RMTKRDP"/>
<dbReference type="OrthoDB" id="809632at2759"/>
<dbReference type="BRENDA" id="1.1.1.54">
    <property type="organism ID" value="3645"/>
</dbReference>
<dbReference type="BRENDA" id="1.3.1.102">
    <property type="organism ID" value="3645"/>
</dbReference>
<dbReference type="EvolutionaryTrace" id="Q9SLN8"/>
<dbReference type="Proteomes" id="UP000084051">
    <property type="component" value="Unplaced"/>
</dbReference>
<dbReference type="GO" id="GO:0035798">
    <property type="term" value="F:2-alkenal reductase (NADPH) activity"/>
    <property type="evidence" value="ECO:0007669"/>
    <property type="project" value="UniProtKB-EC"/>
</dbReference>
<dbReference type="GO" id="GO:0032440">
    <property type="term" value="F:2-alkenal reductase [NAD(P)+] activity"/>
    <property type="evidence" value="ECO:0000318"/>
    <property type="project" value="GO_Central"/>
</dbReference>
<dbReference type="CDD" id="cd08295">
    <property type="entry name" value="double_bond_reductase_like"/>
    <property type="match status" value="1"/>
</dbReference>
<dbReference type="FunFam" id="3.90.180.10:FF:000049">
    <property type="entry name" value="NADPH-dependent oxidoreductase 2-alkenal reductase"/>
    <property type="match status" value="1"/>
</dbReference>
<dbReference type="FunFam" id="3.40.50.720:FF:000121">
    <property type="entry name" value="Prostaglandin reductase 2"/>
    <property type="match status" value="1"/>
</dbReference>
<dbReference type="Gene3D" id="3.90.180.10">
    <property type="entry name" value="Medium-chain alcohol dehydrogenases, catalytic domain"/>
    <property type="match status" value="1"/>
</dbReference>
<dbReference type="Gene3D" id="3.40.50.720">
    <property type="entry name" value="NAD(P)-binding Rossmann-like Domain"/>
    <property type="match status" value="1"/>
</dbReference>
<dbReference type="InterPro" id="IPR013149">
    <property type="entry name" value="ADH-like_C"/>
</dbReference>
<dbReference type="InterPro" id="IPR041694">
    <property type="entry name" value="ADH_N_2"/>
</dbReference>
<dbReference type="InterPro" id="IPR011032">
    <property type="entry name" value="GroES-like_sf"/>
</dbReference>
<dbReference type="InterPro" id="IPR045010">
    <property type="entry name" value="MDR_fam"/>
</dbReference>
<dbReference type="InterPro" id="IPR036291">
    <property type="entry name" value="NAD(P)-bd_dom_sf"/>
</dbReference>
<dbReference type="InterPro" id="IPR020843">
    <property type="entry name" value="PKS_ER"/>
</dbReference>
<dbReference type="PANTHER" id="PTHR43205">
    <property type="entry name" value="PROSTAGLANDIN REDUCTASE"/>
    <property type="match status" value="1"/>
</dbReference>
<dbReference type="PANTHER" id="PTHR43205:SF7">
    <property type="entry name" value="PROSTAGLANDIN REDUCTASE 1"/>
    <property type="match status" value="1"/>
</dbReference>
<dbReference type="Pfam" id="PF16884">
    <property type="entry name" value="ADH_N_2"/>
    <property type="match status" value="1"/>
</dbReference>
<dbReference type="Pfam" id="PF00107">
    <property type="entry name" value="ADH_zinc_N"/>
    <property type="match status" value="1"/>
</dbReference>
<dbReference type="SMART" id="SM00829">
    <property type="entry name" value="PKS_ER"/>
    <property type="match status" value="1"/>
</dbReference>
<dbReference type="SUPFAM" id="SSF50129">
    <property type="entry name" value="GroES-like"/>
    <property type="match status" value="2"/>
</dbReference>
<dbReference type="SUPFAM" id="SSF51735">
    <property type="entry name" value="NAD(P)-binding Rossmann-fold domains"/>
    <property type="match status" value="1"/>
</dbReference>
<sequence>MAEEVSNKQVILKNYVTGYPKESDMEIKNVTIKLKVPEGSNDVVVKNLYLSCDPYMRSRMRKIEGSYVESFAPGSPITGYGVAKVLESGDPKFQKGDLVWGMTGWEEYSIITPTQTLFKIHDKDVPLSYYTGILGMPGMTAYAGFHEVCSPKKGETVFVSAASGAVGQLVGQFAKMLGCYVVGSAGSKEKVDLLKSKFGFDEAFNYKEEQDLSAALKRYFPDGIDIYFENVGGKMLDAVLVNMKLYGRIAVCGMISQYNLEQTEGVHNLFCLITKRIRMEGFLVFDYYHLYPKYLEMVIPQIKAGKVVYVEDVAHGLESAPTALVGLFSGRNIGKQVVMVSRE</sequence>
<proteinExistence type="evidence at protein level"/>
<comment type="function">
    <text evidence="2 3 4">Reduces the C=C double bonds of alpha, beta unsaturated enones, but has no activity on enones with an endocyclic C=C double-bond. Shows a high specificity for NADPH as the hybrid donor. Substrates are 1-nitrocyclohexene, 2-methylpentenal, trans-cinnamaldehyde, methyl-trans-2-methylcinnamaldehyde, trans-2-nonenal and 1-octen-3-one. Reduced activity with aplha-methyl transcinnamaldehyde, 1-cyclohexene-1-carboxaldehyde, methyl crotonate, (R)-pulegone, and dimethyl itaconate and no activity with maleimides, citral, (5R)- or (5S)-carvone, (S)-perillyl alcohol, and substituted cyclohexenones and cyclopentenones (PubMed:17945329, Ref.3). May also act as a allyl-alcohol dehydrogenase by catalyzing the dehydrogenation of secondary allylic alcohols rather than saturated secondary alcohols. Allyl-alcohol dehydrogenase is specific for the S-stereoisomer of the alcohols (PubMed:11117876).</text>
</comment>
<comment type="catalytic activity">
    <reaction evidence="3 4 5">
        <text>an n-alkanal + NADP(+) = an alk-2-enal + NADPH + H(+)</text>
        <dbReference type="Rhea" id="RHEA:13737"/>
        <dbReference type="ChEBI" id="CHEBI:12834"/>
        <dbReference type="ChEBI" id="CHEBI:13757"/>
        <dbReference type="ChEBI" id="CHEBI:15378"/>
        <dbReference type="ChEBI" id="CHEBI:57783"/>
        <dbReference type="ChEBI" id="CHEBI:58349"/>
        <dbReference type="EC" id="1.3.1.102"/>
    </reaction>
</comment>
<comment type="biophysicochemical properties">
    <kinetics>
        <KM evidence="3 5">1.4 mM for (R)-pulegone (at pH 7.0)</KM>
        <KM evidence="3 5">8.3 mM for (S)-pulegone (at pH 7.0)</KM>
        <KM evidence="3 5">5.8 uM for NADPH (at pH 5.4)</KM>
        <KM evidence="3 5">57 uM for 1-nitrocyclohexene (at pH 7.3)</KM>
        <KM evidence="3 5">1032 uM for 2-methylpentenal (at pH 5.4)</KM>
        <KM evidence="3 5">837 uM for 2-methylpentenal (at pH 7.3)</KM>
        <KM evidence="3 5">516 uM for methyl-trans-2-methylcinnamaldehyde (at pH 7.3)</KM>
        <text>kcat is 3.3 sec(-1) for (R)-pulegone at pH 7.0. kcat is 2.8 sec(-1) for (S)-pulegone at pH 7.0. kcat is 1.3 sec(-1) for NADPH at pH 7.3. kcat is 1.46 sec(-1) for 1-nitrocyclohexene at pH 7.3. kcat is 9.2 sec(-1) for 2-methylpentenal at pH 5.4. kcat is 0.66 sec(-1) for 2-methylpentenal at pH 7.3. kcat is 1.1 sec(-1) for methyl-trans-2-methylcinnamaldehyde at pH 7.3.</text>
    </kinetics>
    <phDependence>
        <text evidence="3 5">Optimum pH is 5.4 with 1-nitrocyclohexene as substrate.</text>
    </phDependence>
</comment>
<comment type="subunit">
    <text evidence="2 3 5">Homodimer.</text>
</comment>
<comment type="miscellaneous">
    <text>There are no hydrogen bonds between the substrate tested and the crystallized protein (Ref.4). The reduction of pulegone shows no sterospecificity and only the pro-4R hydrogen of NADPH is incorporated into the C=C double bond of pulegone (Ref.3).</text>
</comment>
<comment type="similarity">
    <text evidence="9">Belongs to the NADP-dependent oxidoreductase L4BD family.</text>
</comment>
<comment type="caution">
    <text evidence="9">PubMed:11117876 showed an allyl-alcohol dehydrogenase activity on (2S,4S)-carveol while PubMed:17945329 and Ref.4 showed an exclusive enone reductase activity.</text>
</comment>
<gene>
    <name type="primary">DBR</name>
</gene>
<keyword id="KW-0002">3D-structure</keyword>
<keyword id="KW-0903">Direct protein sequencing</keyword>
<keyword id="KW-0521">NADP</keyword>
<keyword id="KW-0560">Oxidoreductase</keyword>
<keyword id="KW-1185">Reference proteome</keyword>
<reference key="1">
    <citation type="journal article" date="2000" name="Phytochemistry">
        <title>A 38 kDa allylic alcohol dehydrogenase from the cultured cells of Nicotiana tabacum.</title>
        <authorList>
            <person name="Hirata T."/>
            <person name="Tamura Y."/>
            <person name="Yokobatake N."/>
            <person name="Shimoda K."/>
            <person name="Ashida Y."/>
        </authorList>
    </citation>
    <scope>NUCLEOTIDE SEQUENCE [MRNA]</scope>
    <scope>PROTEIN SEQUENCE OF 85-101 AND 153-178</scope>
    <scope>FUNCTION</scope>
    <scope>SUBUNIT</scope>
</reference>
<reference key="2">
    <citation type="journal article" date="2008" name="Bioorg. Chem.">
        <title>An enone reductase from Nicotiana tabacum: cDNA cloning, expression in Escherichia coli, and reduction of enones with the recombinant proteins.</title>
        <authorList>
            <person name="Matsushima A."/>
            <person name="Sato Y."/>
            <person name="Otsuka M."/>
            <person name="Watanabe T."/>
            <person name="Yamamoto H."/>
            <person name="Hirata T."/>
        </authorList>
    </citation>
    <scope>PROTEIN SEQUENCE OF 62-74</scope>
    <scope>FUNCTION</scope>
    <scope>CATALYTIC ACTIVITY</scope>
    <scope>BIOPHYSICOCHEMICAL PROPERTIES</scope>
    <scope>SUBUNIT</scope>
</reference>
<reference key="3">
    <citation type="journal article" date="2009" name="J. Mol. Catal., B Enzym.">
        <title>Stereospecific hydrogenation of the C=C double bond of enones by Escherichia coli overexpressing an enone reductase of Nicotiana tabacum.</title>
        <authorList>
            <person name="Hirataa T."/>
            <person name="Matsushimab A."/>
            <person name="Satoa Y."/>
            <person name="Iwasakia T."/>
            <person name="Nomuraa H."/>
            <person name="Watanabea T."/>
            <person name="Toyodaa S."/>
            <person name="Izumia S."/>
        </authorList>
    </citation>
    <scope>FUNCTION</scope>
    <scope>CATALYTIC ACTIVITY</scope>
</reference>
<reference key="4">
    <citation type="journal article" date="2013" name="ACS Catal.">
        <title>Biocatalytic asymmetric alkene reduction: crystal structure and characterization of a double bond reductase from Nicotiana tabacum.</title>
        <authorList>
            <person name="Mansell D.J."/>
            <person name="Toogood H.S."/>
            <person name="Waller J."/>
            <person name="Hughes J.M.X."/>
            <person name="Levy C.W."/>
            <person name="Gardiner J.M."/>
            <person name="Scrutton N.S."/>
        </authorList>
    </citation>
    <scope>X-RAY CRYSTALLOGRAPHY (1.9 ANGSTROMS) IN COMPLEX WITH NADPH AND SUBSTRATE</scope>
    <scope>CATALYTIC ACTIVITY</scope>
    <scope>BIOPHYSICOCHEMICAL PROPERTIES</scope>
    <scope>SUBUNIT</scope>
</reference>
<organism>
    <name type="scientific">Nicotiana tabacum</name>
    <name type="common">Common tobacco</name>
    <dbReference type="NCBI Taxonomy" id="4097"/>
    <lineage>
        <taxon>Eukaryota</taxon>
        <taxon>Viridiplantae</taxon>
        <taxon>Streptophyta</taxon>
        <taxon>Embryophyta</taxon>
        <taxon>Tracheophyta</taxon>
        <taxon>Spermatophyta</taxon>
        <taxon>Magnoliopsida</taxon>
        <taxon>eudicotyledons</taxon>
        <taxon>Gunneridae</taxon>
        <taxon>Pentapetalae</taxon>
        <taxon>asterids</taxon>
        <taxon>lamiids</taxon>
        <taxon>Solanales</taxon>
        <taxon>Solanaceae</taxon>
        <taxon>Nicotianoideae</taxon>
        <taxon>Nicotianeae</taxon>
        <taxon>Nicotiana</taxon>
    </lineage>
</organism>
<name>DBR_TOBAC</name>
<protein>
    <recommendedName>
        <fullName>2-alkenal reductase (NADP(+)-dependent)</fullName>
        <ecNumber evidence="3 4 5">1.3.1.102</ecNumber>
    </recommendedName>
    <alternativeName>
        <fullName>Alkenal double bound reductase</fullName>
    </alternativeName>
    <alternativeName>
        <fullName evidence="6">Allylic alcohol dehydrogenase 1</fullName>
        <shortName evidence="6">allyl-ADH1</shortName>
    </alternativeName>
    <alternativeName>
        <fullName evidence="8">Flavin-free double bond reductase</fullName>
        <shortName>NtDBR</shortName>
    </alternativeName>
    <alternativeName>
        <fullName evidence="7">Pulegone reductase</fullName>
        <shortName>NtRed-1</shortName>
    </alternativeName>
</protein>
<feature type="chain" id="PRO_0000423024" description="2-alkenal reductase (NADP(+)-dependent)">
    <location>
        <begin position="1"/>
        <end position="343"/>
    </location>
</feature>
<feature type="binding site" evidence="1">
    <location>
        <position position="55"/>
    </location>
    <ligand>
        <name>substrate</name>
    </ligand>
</feature>
<feature type="binding site" evidence="1">
    <location>
        <position position="80"/>
    </location>
    <ligand>
        <name>substrate</name>
    </ligand>
</feature>
<feature type="binding site" evidence="5">
    <location>
        <begin position="165"/>
        <end position="166"/>
    </location>
    <ligand>
        <name>NADP(+)</name>
        <dbReference type="ChEBI" id="CHEBI:58349"/>
    </ligand>
</feature>
<feature type="binding site" evidence="5">
    <location>
        <position position="186"/>
    </location>
    <ligand>
        <name>NADP(+)</name>
        <dbReference type="ChEBI" id="CHEBI:58349"/>
    </ligand>
</feature>
<feature type="binding site" evidence="5">
    <location>
        <position position="190"/>
    </location>
    <ligand>
        <name>NADP(+)</name>
        <dbReference type="ChEBI" id="CHEBI:58349"/>
    </ligand>
</feature>
<feature type="binding site" evidence="5">
    <location>
        <position position="206"/>
    </location>
    <ligand>
        <name>NADP(+)</name>
        <dbReference type="ChEBI" id="CHEBI:58349"/>
    </ligand>
</feature>
<feature type="binding site" evidence="5">
    <location>
        <position position="230"/>
    </location>
    <ligand>
        <name>NADP(+)</name>
        <dbReference type="ChEBI" id="CHEBI:58349"/>
    </ligand>
</feature>
<feature type="binding site" evidence="5">
    <location>
        <position position="252"/>
    </location>
    <ligand>
        <name>NADP(+)</name>
        <dbReference type="ChEBI" id="CHEBI:58349"/>
    </ligand>
</feature>
<feature type="binding site" evidence="5">
    <location>
        <position position="258"/>
    </location>
    <ligand>
        <name>NADP(+)</name>
        <dbReference type="ChEBI" id="CHEBI:58349"/>
    </ligand>
</feature>
<feature type="binding site" evidence="5">
    <location>
        <begin position="282"/>
        <end position="284"/>
    </location>
    <ligand>
        <name>NADP(+)</name>
        <dbReference type="ChEBI" id="CHEBI:58349"/>
    </ligand>
</feature>
<feature type="binding site" evidence="5">
    <location>
        <position position="332"/>
    </location>
    <ligand>
        <name>NADP(+)</name>
        <dbReference type="ChEBI" id="CHEBI:58349"/>
    </ligand>
</feature>
<feature type="strand" evidence="11">
    <location>
        <begin position="4"/>
        <end position="12"/>
    </location>
</feature>
<feature type="strand" evidence="10">
    <location>
        <begin position="17"/>
        <end position="19"/>
    </location>
</feature>
<feature type="helix" evidence="11">
    <location>
        <begin position="22"/>
        <end position="24"/>
    </location>
</feature>
<feature type="strand" evidence="11">
    <location>
        <begin position="25"/>
        <end position="33"/>
    </location>
</feature>
<feature type="strand" evidence="11">
    <location>
        <begin position="43"/>
        <end position="51"/>
    </location>
</feature>
<feature type="helix" evidence="11">
    <location>
        <begin position="54"/>
        <end position="60"/>
    </location>
</feature>
<feature type="strand" evidence="11">
    <location>
        <begin position="78"/>
        <end position="90"/>
    </location>
</feature>
<feature type="strand" evidence="11">
    <location>
        <begin position="98"/>
        <end position="111"/>
    </location>
</feature>
<feature type="strand" evidence="10">
    <location>
        <begin position="118"/>
        <end position="120"/>
    </location>
</feature>
<feature type="helix" evidence="11">
    <location>
        <begin position="127"/>
        <end position="131"/>
    </location>
</feature>
<feature type="turn" evidence="11">
    <location>
        <begin position="132"/>
        <end position="134"/>
    </location>
</feature>
<feature type="helix" evidence="11">
    <location>
        <begin position="136"/>
        <end position="146"/>
    </location>
</feature>
<feature type="turn" evidence="11">
    <location>
        <begin position="147"/>
        <end position="149"/>
    </location>
</feature>
<feature type="strand" evidence="11">
    <location>
        <begin position="156"/>
        <end position="161"/>
    </location>
</feature>
<feature type="helix" evidence="11">
    <location>
        <begin position="167"/>
        <end position="177"/>
    </location>
</feature>
<feature type="strand" evidence="11">
    <location>
        <begin position="180"/>
        <end position="187"/>
    </location>
</feature>
<feature type="helix" evidence="11">
    <location>
        <begin position="188"/>
        <end position="196"/>
    </location>
</feature>
<feature type="strand" evidence="11">
    <location>
        <begin position="201"/>
        <end position="205"/>
    </location>
</feature>
<feature type="helix" evidence="11">
    <location>
        <begin position="206"/>
        <end position="208"/>
    </location>
</feature>
<feature type="helix" evidence="11">
    <location>
        <begin position="212"/>
        <end position="219"/>
    </location>
</feature>
<feature type="strand" evidence="11">
    <location>
        <begin position="224"/>
        <end position="231"/>
    </location>
</feature>
<feature type="helix" evidence="11">
    <location>
        <begin position="234"/>
        <end position="240"/>
    </location>
</feature>
<feature type="strand" evidence="11">
    <location>
        <begin position="243"/>
        <end position="251"/>
    </location>
</feature>
<feature type="helix" evidence="11">
    <location>
        <begin position="255"/>
        <end position="257"/>
    </location>
</feature>
<feature type="helix" evidence="11">
    <location>
        <begin position="271"/>
        <end position="274"/>
    </location>
</feature>
<feature type="strand" evidence="11">
    <location>
        <begin position="278"/>
        <end position="281"/>
    </location>
</feature>
<feature type="helix" evidence="11">
    <location>
        <begin position="284"/>
        <end position="290"/>
    </location>
</feature>
<feature type="helix" evidence="11">
    <location>
        <begin position="291"/>
        <end position="303"/>
    </location>
</feature>
<feature type="strand" evidence="11">
    <location>
        <begin position="311"/>
        <end position="316"/>
    </location>
</feature>
<feature type="helix" evidence="11">
    <location>
        <begin position="317"/>
        <end position="319"/>
    </location>
</feature>
<feature type="helix" evidence="11">
    <location>
        <begin position="320"/>
        <end position="326"/>
    </location>
</feature>
<feature type="helix" evidence="11">
    <location>
        <begin position="327"/>
        <end position="329"/>
    </location>
</feature>
<feature type="strand" evidence="11">
    <location>
        <begin position="333"/>
        <end position="339"/>
    </location>
</feature>
<accession>Q9SLN8</accession>
<evidence type="ECO:0000250" key="1"/>
<evidence type="ECO:0000269" key="2">
    <source>
    </source>
</evidence>
<evidence type="ECO:0000269" key="3">
    <source>
    </source>
</evidence>
<evidence type="ECO:0000269" key="4">
    <source ref="3"/>
</evidence>
<evidence type="ECO:0000269" key="5">
    <source ref="4"/>
</evidence>
<evidence type="ECO:0000303" key="6">
    <source>
    </source>
</evidence>
<evidence type="ECO:0000303" key="7">
    <source ref="3"/>
</evidence>
<evidence type="ECO:0000303" key="8">
    <source ref="4"/>
</evidence>
<evidence type="ECO:0000305" key="9"/>
<evidence type="ECO:0007829" key="10">
    <source>
        <dbReference type="PDB" id="4HFJ"/>
    </source>
</evidence>
<evidence type="ECO:0007829" key="11">
    <source>
        <dbReference type="PDB" id="4HFM"/>
    </source>
</evidence>